<dbReference type="EC" id="2.1.1.-" evidence="1"/>
<dbReference type="EMBL" id="AAEY01000007">
    <property type="protein sequence ID" value="EAL22745.1"/>
    <property type="molecule type" value="Genomic_DNA"/>
</dbReference>
<dbReference type="RefSeq" id="XP_777392.1">
    <property type="nucleotide sequence ID" value="XM_772299.1"/>
</dbReference>
<dbReference type="GeneID" id="4934285"/>
<dbReference type="KEGG" id="cnb:CNBB1930"/>
<dbReference type="VEuPathDB" id="FungiDB:CNBB1930"/>
<dbReference type="HOGENOM" id="CLU_031650_0_0_1"/>
<dbReference type="OrthoDB" id="2395at5206"/>
<dbReference type="GO" id="GO:0005694">
    <property type="term" value="C:chromosome"/>
    <property type="evidence" value="ECO:0007669"/>
    <property type="project" value="UniProtKB-SubCell"/>
</dbReference>
<dbReference type="GO" id="GO:0005737">
    <property type="term" value="C:cytoplasm"/>
    <property type="evidence" value="ECO:0007669"/>
    <property type="project" value="UniProtKB-SubCell"/>
</dbReference>
<dbReference type="GO" id="GO:0005634">
    <property type="term" value="C:nucleus"/>
    <property type="evidence" value="ECO:0007669"/>
    <property type="project" value="UniProtKB-SubCell"/>
</dbReference>
<dbReference type="GO" id="GO:0042799">
    <property type="term" value="F:histone H4K20 methyltransferase activity"/>
    <property type="evidence" value="ECO:0007669"/>
    <property type="project" value="TreeGrafter"/>
</dbReference>
<dbReference type="GO" id="GO:0032259">
    <property type="term" value="P:methylation"/>
    <property type="evidence" value="ECO:0007669"/>
    <property type="project" value="UniProtKB-KW"/>
</dbReference>
<dbReference type="GO" id="GO:0045814">
    <property type="term" value="P:negative regulation of gene expression, epigenetic"/>
    <property type="evidence" value="ECO:0007669"/>
    <property type="project" value="TreeGrafter"/>
</dbReference>
<dbReference type="CDD" id="cd20071">
    <property type="entry name" value="SET_SMYD"/>
    <property type="match status" value="1"/>
</dbReference>
<dbReference type="Gene3D" id="1.10.220.160">
    <property type="match status" value="1"/>
</dbReference>
<dbReference type="Gene3D" id="6.10.140.2220">
    <property type="match status" value="1"/>
</dbReference>
<dbReference type="Gene3D" id="2.170.270.10">
    <property type="entry name" value="SET domain"/>
    <property type="match status" value="1"/>
</dbReference>
<dbReference type="InterPro" id="IPR001214">
    <property type="entry name" value="SET_dom"/>
</dbReference>
<dbReference type="InterPro" id="IPR046341">
    <property type="entry name" value="SET_dom_sf"/>
</dbReference>
<dbReference type="PANTHER" id="PTHR46402:SF2">
    <property type="entry name" value="HISTONE-LYSINE N-TRIMETHYLTRANSFERASE SMYD5"/>
    <property type="match status" value="1"/>
</dbReference>
<dbReference type="PANTHER" id="PTHR46402">
    <property type="entry name" value="SET AND MYND DOMAIN-CONTAINING PROTEIN 5"/>
    <property type="match status" value="1"/>
</dbReference>
<dbReference type="Pfam" id="PF00856">
    <property type="entry name" value="SET"/>
    <property type="match status" value="1"/>
</dbReference>
<dbReference type="SUPFAM" id="SSF82199">
    <property type="entry name" value="SET domain"/>
    <property type="match status" value="1"/>
</dbReference>
<dbReference type="PROSITE" id="PS50280">
    <property type="entry name" value="SET"/>
    <property type="match status" value="1"/>
</dbReference>
<proteinExistence type="inferred from homology"/>
<keyword id="KW-0158">Chromosome</keyword>
<keyword id="KW-0963">Cytoplasm</keyword>
<keyword id="KW-0489">Methyltransferase</keyword>
<keyword id="KW-0539">Nucleus</keyword>
<keyword id="KW-0949">S-adenosyl-L-methionine</keyword>
<keyword id="KW-0808">Transferase</keyword>
<accession>P0CR43</accession>
<accession>Q55Y21</accession>
<accession>Q5KLW8</accession>
<protein>
    <recommendedName>
        <fullName>Histone-lysine N-methyltransferase SET5</fullName>
        <ecNumber evidence="1">2.1.1.-</ecNumber>
    </recommendedName>
    <alternativeName>
        <fullName>SET domain-containing protein 5</fullName>
    </alternativeName>
</protein>
<reference key="1">
    <citation type="journal article" date="2005" name="Science">
        <title>The genome of the basidiomycetous yeast and human pathogen Cryptococcus neoformans.</title>
        <authorList>
            <person name="Loftus B.J."/>
            <person name="Fung E."/>
            <person name="Roncaglia P."/>
            <person name="Rowley D."/>
            <person name="Amedeo P."/>
            <person name="Bruno D."/>
            <person name="Vamathevan J."/>
            <person name="Miranda M."/>
            <person name="Anderson I.J."/>
            <person name="Fraser J.A."/>
            <person name="Allen J.E."/>
            <person name="Bosdet I.E."/>
            <person name="Brent M.R."/>
            <person name="Chiu R."/>
            <person name="Doering T.L."/>
            <person name="Donlin M.J."/>
            <person name="D'Souza C.A."/>
            <person name="Fox D.S."/>
            <person name="Grinberg V."/>
            <person name="Fu J."/>
            <person name="Fukushima M."/>
            <person name="Haas B.J."/>
            <person name="Huang J.C."/>
            <person name="Janbon G."/>
            <person name="Jones S.J.M."/>
            <person name="Koo H.L."/>
            <person name="Krzywinski M.I."/>
            <person name="Kwon-Chung K.J."/>
            <person name="Lengeler K.B."/>
            <person name="Maiti R."/>
            <person name="Marra M.A."/>
            <person name="Marra R.E."/>
            <person name="Mathewson C.A."/>
            <person name="Mitchell T.G."/>
            <person name="Pertea M."/>
            <person name="Riggs F.R."/>
            <person name="Salzberg S.L."/>
            <person name="Schein J.E."/>
            <person name="Shvartsbeyn A."/>
            <person name="Shin H."/>
            <person name="Shumway M."/>
            <person name="Specht C.A."/>
            <person name="Suh B.B."/>
            <person name="Tenney A."/>
            <person name="Utterback T.R."/>
            <person name="Wickes B.L."/>
            <person name="Wortman J.R."/>
            <person name="Wye N.H."/>
            <person name="Kronstad J.W."/>
            <person name="Lodge J.K."/>
            <person name="Heitman J."/>
            <person name="Davis R.W."/>
            <person name="Fraser C.M."/>
            <person name="Hyman R.W."/>
        </authorList>
    </citation>
    <scope>NUCLEOTIDE SEQUENCE [LARGE SCALE GENOMIC DNA]</scope>
    <source>
        <strain>B-3501A</strain>
    </source>
</reference>
<gene>
    <name type="primary">SET5</name>
    <name type="ordered locus">CNBB1930</name>
</gene>
<feature type="chain" id="PRO_0000410283" description="Histone-lysine N-methyltransferase SET5">
    <location>
        <begin position="1"/>
        <end position="449"/>
    </location>
</feature>
<feature type="domain" description="SET" evidence="2">
    <location>
        <begin position="93"/>
        <end position="410"/>
    </location>
</feature>
<comment type="function">
    <text evidence="1">Histone methyltransferase that monomethylates 'Lys-5', 'Lys-8' and 'Lys-12' of histone H4 (H4K5me1, H4K8me1 and H4K12me1, respectively), thereby controlling gene expression and remodeling chromatin structures.</text>
</comment>
<comment type="catalytic activity">
    <reaction evidence="1">
        <text>L-lysyl-[histone] + S-adenosyl-L-methionine = N(6)-methyl-L-lysyl-[histone] + S-adenosyl-L-homocysteine + H(+)</text>
        <dbReference type="Rhea" id="RHEA:10024"/>
        <dbReference type="Rhea" id="RHEA-COMP:9845"/>
        <dbReference type="Rhea" id="RHEA-COMP:9846"/>
        <dbReference type="ChEBI" id="CHEBI:15378"/>
        <dbReference type="ChEBI" id="CHEBI:29969"/>
        <dbReference type="ChEBI" id="CHEBI:57856"/>
        <dbReference type="ChEBI" id="CHEBI:59789"/>
        <dbReference type="ChEBI" id="CHEBI:61929"/>
    </reaction>
    <physiologicalReaction direction="left-to-right" evidence="1">
        <dbReference type="Rhea" id="RHEA:10025"/>
    </physiologicalReaction>
</comment>
<comment type="subcellular location">
    <subcellularLocation>
        <location evidence="1">Nucleus</location>
    </subcellularLocation>
    <subcellularLocation>
        <location evidence="1">Chromosome</location>
    </subcellularLocation>
    <subcellularLocation>
        <location evidence="1">Cytoplasm</location>
    </subcellularLocation>
</comment>
<comment type="similarity">
    <text evidence="2">Belongs to the class V-like SAM-binding methyltransferase superfamily. Histone-lysine methyltransferase family. SET5 subfamily.</text>
</comment>
<name>SET5_CRYNB</name>
<sequence length="449" mass="50813">MKDLTAEAAISPSDDNLLPALASLREGHPDKGILKLLAQLKIDHPEWAVSEKRFRKALQLAPCPGGGEADPKEKALVADTGLDPSIDVKSIAPKVEVKMFAGGKGKGLVAKEELKQGEMLWQEEPWIVTSDPGHYSLLTQSMMCSQCFSLFARPSPPISVPCPHCTTAHFCNRLCYTKSLSSSHPPLLCPGLNPDASSLMNFIRKRGERSVEGVAKILARWRGEREWDAKGKAEEMEKRIWKGMARVSQKRKEMERREWSYISKARMEEWHLIHIMLTNVLNPSPTHENYKPFQRLLISQHPRRSKPVPLTEKEVKRWFSFESFLELLGLVGLNQEDSGGLYALHAHMNHSCEPNIQVRNLPKSYTPPTQDTLPVNLPPPIQAGDRVSNKLTILARHEIQPGEELTISYVNMKMSRDERRQALREGYGFWCACDRCMREKEQPNGEKAE</sequence>
<evidence type="ECO:0000250" key="1">
    <source>
        <dbReference type="UniProtKB" id="P38890"/>
    </source>
</evidence>
<evidence type="ECO:0000255" key="2">
    <source>
        <dbReference type="PROSITE-ProRule" id="PRU00190"/>
    </source>
</evidence>
<organism>
    <name type="scientific">Cryptococcus neoformans var. neoformans serotype D (strain B-3501A)</name>
    <name type="common">Filobasidiella neoformans</name>
    <dbReference type="NCBI Taxonomy" id="283643"/>
    <lineage>
        <taxon>Eukaryota</taxon>
        <taxon>Fungi</taxon>
        <taxon>Dikarya</taxon>
        <taxon>Basidiomycota</taxon>
        <taxon>Agaricomycotina</taxon>
        <taxon>Tremellomycetes</taxon>
        <taxon>Tremellales</taxon>
        <taxon>Cryptococcaceae</taxon>
        <taxon>Cryptococcus</taxon>
        <taxon>Cryptococcus neoformans species complex</taxon>
    </lineage>
</organism>